<accession>Q1H0F2</accession>
<reference key="1">
    <citation type="submission" date="2006-03" db="EMBL/GenBank/DDBJ databases">
        <title>Complete sequence of Methylobacillus flagellatus KT.</title>
        <authorList>
            <consortium name="US DOE Joint Genome Institute"/>
            <person name="Copeland A."/>
            <person name="Lucas S."/>
            <person name="Lapidus A."/>
            <person name="Barry K."/>
            <person name="Detter J.C."/>
            <person name="Glavina del Rio T."/>
            <person name="Hammon N."/>
            <person name="Israni S."/>
            <person name="Dalin E."/>
            <person name="Tice H."/>
            <person name="Pitluck S."/>
            <person name="Brettin T."/>
            <person name="Bruce D."/>
            <person name="Han C."/>
            <person name="Tapia R."/>
            <person name="Saunders E."/>
            <person name="Gilna P."/>
            <person name="Schmutz J."/>
            <person name="Larimer F."/>
            <person name="Land M."/>
            <person name="Kyrpides N."/>
            <person name="Anderson I."/>
            <person name="Richardson P."/>
        </authorList>
    </citation>
    <scope>NUCLEOTIDE SEQUENCE [LARGE SCALE GENOMIC DNA]</scope>
    <source>
        <strain>ATCC 51484 / DSM 6875 / VKM B-1610 / KT</strain>
    </source>
</reference>
<proteinExistence type="inferred from homology"/>
<organism>
    <name type="scientific">Methylobacillus flagellatus (strain ATCC 51484 / DSM 6875 / VKM B-1610 / KT)</name>
    <dbReference type="NCBI Taxonomy" id="265072"/>
    <lineage>
        <taxon>Bacteria</taxon>
        <taxon>Pseudomonadati</taxon>
        <taxon>Pseudomonadota</taxon>
        <taxon>Betaproteobacteria</taxon>
        <taxon>Nitrosomonadales</taxon>
        <taxon>Methylophilaceae</taxon>
        <taxon>Methylobacillus</taxon>
    </lineage>
</organism>
<sequence length="567" mass="60696">MSVKIDKRAYAEMFGPTVGDRMRLADTELWLEVEKDYTIYGEEVKFGGGKVIRDGMGQGQGVASEVADTVITNALIVDHWGIVKADIGIKGGYISAIGKAGNPDIQPGVEIAIGAGTEVIAGEGMIVTAGGIDTHIHFICPQQIEEALMSGVTTMIGGGTGPATGTFATTCTPGPWHIHRMLQSADAFPMNLGFLGKGNASLPQPLREQVEAGVVGLKLHEDWGTTPAAIDNCLSIAEEMDVQVAIHSDTLNESGFVETTLGAFKGRTIHTFHTEGAGGGHAPDIIRAAGYPNVLPSSTNPTRPFTINTIDEHLDMLMVCHHLDPAIAEDVAFAESRIRRETIAAEDILHDLGAFAMMSSDSQAMGRVGEVVIRTWQTAHKMKVQRGPLPEDSARNDNFRIKRYIAKYTINPALTHGIAHVVGSIEVGKLADLVLWRPAFFGVKPSTILKGGMIAAAVMGDANASIPTPQPVHYRSMFGSYGGALQTSVTFVSQAALQNPEVAALQLKKPLVAVKGTRGVKKADMVHNGWMPEIDVDPETYEVRADGMVLSCEPAEILPLAQRYFLF</sequence>
<feature type="chain" id="PRO_1000070666" description="Urease subunit alpha">
    <location>
        <begin position="1"/>
        <end position="567"/>
    </location>
</feature>
<feature type="domain" description="Urease" evidence="1">
    <location>
        <begin position="130"/>
        <end position="567"/>
    </location>
</feature>
<feature type="active site" description="Proton donor" evidence="1">
    <location>
        <position position="321"/>
    </location>
</feature>
<feature type="binding site" evidence="1">
    <location>
        <position position="135"/>
    </location>
    <ligand>
        <name>Ni(2+)</name>
        <dbReference type="ChEBI" id="CHEBI:49786"/>
        <label>1</label>
    </ligand>
</feature>
<feature type="binding site" evidence="1">
    <location>
        <position position="137"/>
    </location>
    <ligand>
        <name>Ni(2+)</name>
        <dbReference type="ChEBI" id="CHEBI:49786"/>
        <label>1</label>
    </ligand>
</feature>
<feature type="binding site" description="via carbamate group" evidence="1">
    <location>
        <position position="218"/>
    </location>
    <ligand>
        <name>Ni(2+)</name>
        <dbReference type="ChEBI" id="CHEBI:49786"/>
        <label>1</label>
    </ligand>
</feature>
<feature type="binding site" description="via carbamate group" evidence="1">
    <location>
        <position position="218"/>
    </location>
    <ligand>
        <name>Ni(2+)</name>
        <dbReference type="ChEBI" id="CHEBI:49786"/>
        <label>2</label>
    </ligand>
</feature>
<feature type="binding site" evidence="1">
    <location>
        <position position="220"/>
    </location>
    <ligand>
        <name>substrate</name>
    </ligand>
</feature>
<feature type="binding site" evidence="1">
    <location>
        <position position="247"/>
    </location>
    <ligand>
        <name>Ni(2+)</name>
        <dbReference type="ChEBI" id="CHEBI:49786"/>
        <label>2</label>
    </ligand>
</feature>
<feature type="binding site" evidence="1">
    <location>
        <position position="273"/>
    </location>
    <ligand>
        <name>Ni(2+)</name>
        <dbReference type="ChEBI" id="CHEBI:49786"/>
        <label>2</label>
    </ligand>
</feature>
<feature type="binding site" evidence="1">
    <location>
        <position position="361"/>
    </location>
    <ligand>
        <name>Ni(2+)</name>
        <dbReference type="ChEBI" id="CHEBI:49786"/>
        <label>1</label>
    </ligand>
</feature>
<feature type="modified residue" description="N6-carboxylysine" evidence="1">
    <location>
        <position position="218"/>
    </location>
</feature>
<gene>
    <name evidence="1" type="primary">ureC</name>
    <name type="ordered locus">Mfla_1767</name>
</gene>
<comment type="catalytic activity">
    <reaction evidence="1">
        <text>urea + 2 H2O + H(+) = hydrogencarbonate + 2 NH4(+)</text>
        <dbReference type="Rhea" id="RHEA:20557"/>
        <dbReference type="ChEBI" id="CHEBI:15377"/>
        <dbReference type="ChEBI" id="CHEBI:15378"/>
        <dbReference type="ChEBI" id="CHEBI:16199"/>
        <dbReference type="ChEBI" id="CHEBI:17544"/>
        <dbReference type="ChEBI" id="CHEBI:28938"/>
        <dbReference type="EC" id="3.5.1.5"/>
    </reaction>
</comment>
<comment type="cofactor">
    <cofactor evidence="1">
        <name>Ni cation</name>
        <dbReference type="ChEBI" id="CHEBI:25516"/>
    </cofactor>
    <text evidence="1">Binds 2 nickel ions per subunit.</text>
</comment>
<comment type="pathway">
    <text evidence="1">Nitrogen metabolism; urea degradation; CO(2) and NH(3) from urea (urease route): step 1/1.</text>
</comment>
<comment type="subunit">
    <text evidence="1">Heterotrimer of UreA (gamma), UreB (beta) and UreC (alpha) subunits. Three heterotrimers associate to form the active enzyme.</text>
</comment>
<comment type="subcellular location">
    <subcellularLocation>
        <location evidence="1">Cytoplasm</location>
    </subcellularLocation>
</comment>
<comment type="PTM">
    <text evidence="1">Carboxylation allows a single lysine to coordinate two nickel ions.</text>
</comment>
<comment type="similarity">
    <text evidence="1">Belongs to the metallo-dependent hydrolases superfamily. Urease alpha subunit family.</text>
</comment>
<dbReference type="EC" id="3.5.1.5" evidence="1"/>
<dbReference type="EMBL" id="CP000284">
    <property type="protein sequence ID" value="ABE50035.1"/>
    <property type="molecule type" value="Genomic_DNA"/>
</dbReference>
<dbReference type="RefSeq" id="WP_011479989.1">
    <property type="nucleotide sequence ID" value="NC_007947.1"/>
</dbReference>
<dbReference type="SMR" id="Q1H0F2"/>
<dbReference type="STRING" id="265072.Mfla_1767"/>
<dbReference type="MEROPS" id="M38.982"/>
<dbReference type="KEGG" id="mfa:Mfla_1767"/>
<dbReference type="eggNOG" id="COG0804">
    <property type="taxonomic scope" value="Bacteria"/>
</dbReference>
<dbReference type="HOGENOM" id="CLU_000980_0_0_4"/>
<dbReference type="OrthoDB" id="9802793at2"/>
<dbReference type="UniPathway" id="UPA00258">
    <property type="reaction ID" value="UER00370"/>
</dbReference>
<dbReference type="Proteomes" id="UP000002440">
    <property type="component" value="Chromosome"/>
</dbReference>
<dbReference type="GO" id="GO:0005737">
    <property type="term" value="C:cytoplasm"/>
    <property type="evidence" value="ECO:0007669"/>
    <property type="project" value="UniProtKB-SubCell"/>
</dbReference>
<dbReference type="GO" id="GO:0016151">
    <property type="term" value="F:nickel cation binding"/>
    <property type="evidence" value="ECO:0007669"/>
    <property type="project" value="UniProtKB-UniRule"/>
</dbReference>
<dbReference type="GO" id="GO:0009039">
    <property type="term" value="F:urease activity"/>
    <property type="evidence" value="ECO:0007669"/>
    <property type="project" value="UniProtKB-UniRule"/>
</dbReference>
<dbReference type="GO" id="GO:0043419">
    <property type="term" value="P:urea catabolic process"/>
    <property type="evidence" value="ECO:0007669"/>
    <property type="project" value="UniProtKB-UniRule"/>
</dbReference>
<dbReference type="CDD" id="cd00375">
    <property type="entry name" value="Urease_alpha"/>
    <property type="match status" value="1"/>
</dbReference>
<dbReference type="Gene3D" id="3.20.20.140">
    <property type="entry name" value="Metal-dependent hydrolases"/>
    <property type="match status" value="1"/>
</dbReference>
<dbReference type="Gene3D" id="2.30.40.10">
    <property type="entry name" value="Urease, subunit C, domain 1"/>
    <property type="match status" value="1"/>
</dbReference>
<dbReference type="HAMAP" id="MF_01953">
    <property type="entry name" value="Urease_alpha"/>
    <property type="match status" value="1"/>
</dbReference>
<dbReference type="InterPro" id="IPR006680">
    <property type="entry name" value="Amidohydro-rel"/>
</dbReference>
<dbReference type="InterPro" id="IPR011059">
    <property type="entry name" value="Metal-dep_hydrolase_composite"/>
</dbReference>
<dbReference type="InterPro" id="IPR032466">
    <property type="entry name" value="Metal_Hydrolase"/>
</dbReference>
<dbReference type="InterPro" id="IPR011612">
    <property type="entry name" value="Urease_alpha_N_dom"/>
</dbReference>
<dbReference type="InterPro" id="IPR050112">
    <property type="entry name" value="Urease_alpha_subunit"/>
</dbReference>
<dbReference type="InterPro" id="IPR017950">
    <property type="entry name" value="Urease_AS"/>
</dbReference>
<dbReference type="InterPro" id="IPR005848">
    <property type="entry name" value="Urease_asu"/>
</dbReference>
<dbReference type="InterPro" id="IPR017951">
    <property type="entry name" value="Urease_asu_c"/>
</dbReference>
<dbReference type="InterPro" id="IPR029754">
    <property type="entry name" value="Urease_Ni-bd"/>
</dbReference>
<dbReference type="NCBIfam" id="NF009686">
    <property type="entry name" value="PRK13207.1"/>
    <property type="match status" value="1"/>
</dbReference>
<dbReference type="NCBIfam" id="TIGR01792">
    <property type="entry name" value="urease_alph"/>
    <property type="match status" value="1"/>
</dbReference>
<dbReference type="PANTHER" id="PTHR43440">
    <property type="entry name" value="UREASE"/>
    <property type="match status" value="1"/>
</dbReference>
<dbReference type="PANTHER" id="PTHR43440:SF1">
    <property type="entry name" value="UREASE"/>
    <property type="match status" value="1"/>
</dbReference>
<dbReference type="Pfam" id="PF01979">
    <property type="entry name" value="Amidohydro_1"/>
    <property type="match status" value="1"/>
</dbReference>
<dbReference type="Pfam" id="PF00449">
    <property type="entry name" value="Urease_alpha"/>
    <property type="match status" value="1"/>
</dbReference>
<dbReference type="PRINTS" id="PR01752">
    <property type="entry name" value="UREASE"/>
</dbReference>
<dbReference type="SUPFAM" id="SSF51338">
    <property type="entry name" value="Composite domain of metallo-dependent hydrolases"/>
    <property type="match status" value="2"/>
</dbReference>
<dbReference type="SUPFAM" id="SSF51556">
    <property type="entry name" value="Metallo-dependent hydrolases"/>
    <property type="match status" value="1"/>
</dbReference>
<dbReference type="PROSITE" id="PS01120">
    <property type="entry name" value="UREASE_1"/>
    <property type="match status" value="1"/>
</dbReference>
<dbReference type="PROSITE" id="PS00145">
    <property type="entry name" value="UREASE_2"/>
    <property type="match status" value="1"/>
</dbReference>
<dbReference type="PROSITE" id="PS51368">
    <property type="entry name" value="UREASE_3"/>
    <property type="match status" value="1"/>
</dbReference>
<keyword id="KW-0963">Cytoplasm</keyword>
<keyword id="KW-0378">Hydrolase</keyword>
<keyword id="KW-0479">Metal-binding</keyword>
<keyword id="KW-0533">Nickel</keyword>
<keyword id="KW-1185">Reference proteome</keyword>
<name>URE1_METFK</name>
<evidence type="ECO:0000255" key="1">
    <source>
        <dbReference type="HAMAP-Rule" id="MF_01953"/>
    </source>
</evidence>
<protein>
    <recommendedName>
        <fullName evidence="1">Urease subunit alpha</fullName>
        <ecNumber evidence="1">3.5.1.5</ecNumber>
    </recommendedName>
    <alternativeName>
        <fullName evidence="1">Urea amidohydrolase subunit alpha</fullName>
    </alternativeName>
</protein>